<protein>
    <recommendedName>
        <fullName evidence="1">Small ribosomal subunit protein bS16c</fullName>
    </recommendedName>
    <alternativeName>
        <fullName evidence="2">30S ribosomal protein S16, chloroplastic</fullName>
    </alternativeName>
</protein>
<sequence length="85" mass="10090">MVKLRLKRCGRKQQAIYRIVAIDVRSRREGRDLRKVGFYDPIKNQTCLNVPAILYFLEKGAQPTRTVYDILRKAEFFKDKERTLS</sequence>
<feature type="chain" id="PRO_0000167316" description="Small ribosomal subunit protein bS16c">
    <location>
        <begin position="1"/>
        <end position="85"/>
    </location>
</feature>
<reference key="1">
    <citation type="journal article" date="2004" name="Curr. Genet.">
        <title>Structural features and transcript-editing analysis of sugarcane (Saccharum officinarum L.) chloroplast genome.</title>
        <authorList>
            <person name="Calsa T. Jr."/>
            <person name="Carraro D.M."/>
            <person name="Benatti M.R."/>
            <person name="Barbosa A.C."/>
            <person name="Kitajima J.P."/>
            <person name="Carrer H."/>
        </authorList>
    </citation>
    <scope>NUCLEOTIDE SEQUENCE [LARGE SCALE GENOMIC DNA]</scope>
    <source>
        <strain>cv. SP-80-3280</strain>
    </source>
</reference>
<name>RR16_SACHY</name>
<gene>
    <name evidence="1" type="primary">rps16</name>
    <name type="ordered locus">PS085</name>
</gene>
<geneLocation type="chloroplast"/>
<keyword id="KW-0150">Chloroplast</keyword>
<keyword id="KW-0934">Plastid</keyword>
<keyword id="KW-0687">Ribonucleoprotein</keyword>
<keyword id="KW-0689">Ribosomal protein</keyword>
<dbReference type="EMBL" id="AE009947">
    <property type="protein sequence ID" value="AAT44678.1"/>
    <property type="molecule type" value="Genomic_DNA"/>
</dbReference>
<dbReference type="SMR" id="Q6L3B4"/>
<dbReference type="GO" id="GO:0009507">
    <property type="term" value="C:chloroplast"/>
    <property type="evidence" value="ECO:0007669"/>
    <property type="project" value="UniProtKB-SubCell"/>
</dbReference>
<dbReference type="GO" id="GO:0005739">
    <property type="term" value="C:mitochondrion"/>
    <property type="evidence" value="ECO:0007669"/>
    <property type="project" value="GOC"/>
</dbReference>
<dbReference type="GO" id="GO:0015935">
    <property type="term" value="C:small ribosomal subunit"/>
    <property type="evidence" value="ECO:0007669"/>
    <property type="project" value="TreeGrafter"/>
</dbReference>
<dbReference type="GO" id="GO:0003735">
    <property type="term" value="F:structural constituent of ribosome"/>
    <property type="evidence" value="ECO:0007669"/>
    <property type="project" value="InterPro"/>
</dbReference>
<dbReference type="GO" id="GO:0032543">
    <property type="term" value="P:mitochondrial translation"/>
    <property type="evidence" value="ECO:0007669"/>
    <property type="project" value="TreeGrafter"/>
</dbReference>
<dbReference type="FunFam" id="3.30.1320.10:FF:000003">
    <property type="entry name" value="30S ribosomal protein S16, chloroplastic"/>
    <property type="match status" value="1"/>
</dbReference>
<dbReference type="Gene3D" id="3.30.1320.10">
    <property type="match status" value="1"/>
</dbReference>
<dbReference type="HAMAP" id="MF_00385">
    <property type="entry name" value="Ribosomal_bS16"/>
    <property type="match status" value="1"/>
</dbReference>
<dbReference type="InterPro" id="IPR000307">
    <property type="entry name" value="Ribosomal_bS16"/>
</dbReference>
<dbReference type="InterPro" id="IPR020592">
    <property type="entry name" value="Ribosomal_bS16_CS"/>
</dbReference>
<dbReference type="InterPro" id="IPR023803">
    <property type="entry name" value="Ribosomal_bS16_dom_sf"/>
</dbReference>
<dbReference type="NCBIfam" id="TIGR00002">
    <property type="entry name" value="S16"/>
    <property type="match status" value="1"/>
</dbReference>
<dbReference type="PANTHER" id="PTHR12919">
    <property type="entry name" value="30S RIBOSOMAL PROTEIN S16"/>
    <property type="match status" value="1"/>
</dbReference>
<dbReference type="PANTHER" id="PTHR12919:SF20">
    <property type="entry name" value="SMALL RIBOSOMAL SUBUNIT PROTEIN BS16M"/>
    <property type="match status" value="1"/>
</dbReference>
<dbReference type="Pfam" id="PF00886">
    <property type="entry name" value="Ribosomal_S16"/>
    <property type="match status" value="1"/>
</dbReference>
<dbReference type="SUPFAM" id="SSF54565">
    <property type="entry name" value="Ribosomal protein S16"/>
    <property type="match status" value="1"/>
</dbReference>
<dbReference type="PROSITE" id="PS00732">
    <property type="entry name" value="RIBOSOMAL_S16"/>
    <property type="match status" value="1"/>
</dbReference>
<organism>
    <name type="scientific">Saccharum hybrid</name>
    <name type="common">Sugarcane</name>
    <dbReference type="NCBI Taxonomy" id="15819"/>
    <lineage>
        <taxon>Eukaryota</taxon>
        <taxon>Viridiplantae</taxon>
        <taxon>Streptophyta</taxon>
        <taxon>Embryophyta</taxon>
        <taxon>Tracheophyta</taxon>
        <taxon>Spermatophyta</taxon>
        <taxon>Magnoliopsida</taxon>
        <taxon>Liliopsida</taxon>
        <taxon>Poales</taxon>
        <taxon>Poaceae</taxon>
        <taxon>PACMAD clade</taxon>
        <taxon>Panicoideae</taxon>
        <taxon>Andropogonodae</taxon>
        <taxon>Andropogoneae</taxon>
        <taxon>Saccharinae</taxon>
        <taxon>Saccharum</taxon>
    </lineage>
</organism>
<comment type="subcellular location">
    <subcellularLocation>
        <location>Plastid</location>
        <location>Chloroplast</location>
    </subcellularLocation>
</comment>
<comment type="similarity">
    <text evidence="1">Belongs to the bacterial ribosomal protein bS16 family.</text>
</comment>
<proteinExistence type="inferred from homology"/>
<accession>Q6L3B4</accession>
<evidence type="ECO:0000255" key="1">
    <source>
        <dbReference type="HAMAP-Rule" id="MF_00385"/>
    </source>
</evidence>
<evidence type="ECO:0000305" key="2"/>